<reference key="1">
    <citation type="journal article" date="1999" name="Nature">
        <title>Sequence and analysis of chromosome 4 of the plant Arabidopsis thaliana.</title>
        <authorList>
            <person name="Mayer K.F.X."/>
            <person name="Schueller C."/>
            <person name="Wambutt R."/>
            <person name="Murphy G."/>
            <person name="Volckaert G."/>
            <person name="Pohl T."/>
            <person name="Duesterhoeft A."/>
            <person name="Stiekema W."/>
            <person name="Entian K.-D."/>
            <person name="Terryn N."/>
            <person name="Harris B."/>
            <person name="Ansorge W."/>
            <person name="Brandt P."/>
            <person name="Grivell L.A."/>
            <person name="Rieger M."/>
            <person name="Weichselgartner M."/>
            <person name="de Simone V."/>
            <person name="Obermaier B."/>
            <person name="Mache R."/>
            <person name="Mueller M."/>
            <person name="Kreis M."/>
            <person name="Delseny M."/>
            <person name="Puigdomenech P."/>
            <person name="Watson M."/>
            <person name="Schmidtheini T."/>
            <person name="Reichert B."/>
            <person name="Portetelle D."/>
            <person name="Perez-Alonso M."/>
            <person name="Boutry M."/>
            <person name="Bancroft I."/>
            <person name="Vos P."/>
            <person name="Hoheisel J."/>
            <person name="Zimmermann W."/>
            <person name="Wedler H."/>
            <person name="Ridley P."/>
            <person name="Langham S.-A."/>
            <person name="McCullagh B."/>
            <person name="Bilham L."/>
            <person name="Robben J."/>
            <person name="van der Schueren J."/>
            <person name="Grymonprez B."/>
            <person name="Chuang Y.-J."/>
            <person name="Vandenbussche F."/>
            <person name="Braeken M."/>
            <person name="Weltjens I."/>
            <person name="Voet M."/>
            <person name="Bastiaens I."/>
            <person name="Aert R."/>
            <person name="Defoor E."/>
            <person name="Weitzenegger T."/>
            <person name="Bothe G."/>
            <person name="Ramsperger U."/>
            <person name="Hilbert H."/>
            <person name="Braun M."/>
            <person name="Holzer E."/>
            <person name="Brandt A."/>
            <person name="Peters S."/>
            <person name="van Staveren M."/>
            <person name="Dirkse W."/>
            <person name="Mooijman P."/>
            <person name="Klein Lankhorst R."/>
            <person name="Rose M."/>
            <person name="Hauf J."/>
            <person name="Koetter P."/>
            <person name="Berneiser S."/>
            <person name="Hempel S."/>
            <person name="Feldpausch M."/>
            <person name="Lamberth S."/>
            <person name="Van den Daele H."/>
            <person name="De Keyser A."/>
            <person name="Buysshaert C."/>
            <person name="Gielen J."/>
            <person name="Villarroel R."/>
            <person name="De Clercq R."/>
            <person name="van Montagu M."/>
            <person name="Rogers J."/>
            <person name="Cronin A."/>
            <person name="Quail M.A."/>
            <person name="Bray-Allen S."/>
            <person name="Clark L."/>
            <person name="Doggett J."/>
            <person name="Hall S."/>
            <person name="Kay M."/>
            <person name="Lennard N."/>
            <person name="McLay K."/>
            <person name="Mayes R."/>
            <person name="Pettett A."/>
            <person name="Rajandream M.A."/>
            <person name="Lyne M."/>
            <person name="Benes V."/>
            <person name="Rechmann S."/>
            <person name="Borkova D."/>
            <person name="Bloecker H."/>
            <person name="Scharfe M."/>
            <person name="Grimm M."/>
            <person name="Loehnert T.-H."/>
            <person name="Dose S."/>
            <person name="de Haan M."/>
            <person name="Maarse A.C."/>
            <person name="Schaefer M."/>
            <person name="Mueller-Auer S."/>
            <person name="Gabel C."/>
            <person name="Fuchs M."/>
            <person name="Fartmann B."/>
            <person name="Granderath K."/>
            <person name="Dauner D."/>
            <person name="Herzl A."/>
            <person name="Neumann S."/>
            <person name="Argiriou A."/>
            <person name="Vitale D."/>
            <person name="Liguori R."/>
            <person name="Piravandi E."/>
            <person name="Massenet O."/>
            <person name="Quigley F."/>
            <person name="Clabauld G."/>
            <person name="Muendlein A."/>
            <person name="Felber R."/>
            <person name="Schnabl S."/>
            <person name="Hiller R."/>
            <person name="Schmidt W."/>
            <person name="Lecharny A."/>
            <person name="Aubourg S."/>
            <person name="Chefdor F."/>
            <person name="Cooke R."/>
            <person name="Berger C."/>
            <person name="Monfort A."/>
            <person name="Casacuberta E."/>
            <person name="Gibbons T."/>
            <person name="Weber N."/>
            <person name="Vandenbol M."/>
            <person name="Bargues M."/>
            <person name="Terol J."/>
            <person name="Torres A."/>
            <person name="Perez-Perez A."/>
            <person name="Purnelle B."/>
            <person name="Bent E."/>
            <person name="Johnson S."/>
            <person name="Tacon D."/>
            <person name="Jesse T."/>
            <person name="Heijnen L."/>
            <person name="Schwarz S."/>
            <person name="Scholler P."/>
            <person name="Heber S."/>
            <person name="Francs P."/>
            <person name="Bielke C."/>
            <person name="Frishman D."/>
            <person name="Haase D."/>
            <person name="Lemcke K."/>
            <person name="Mewes H.-W."/>
            <person name="Stocker S."/>
            <person name="Zaccaria P."/>
            <person name="Bevan M."/>
            <person name="Wilson R.K."/>
            <person name="de la Bastide M."/>
            <person name="Habermann K."/>
            <person name="Parnell L."/>
            <person name="Dedhia N."/>
            <person name="Gnoj L."/>
            <person name="Schutz K."/>
            <person name="Huang E."/>
            <person name="Spiegel L."/>
            <person name="Sekhon M."/>
            <person name="Murray J."/>
            <person name="Sheet P."/>
            <person name="Cordes M."/>
            <person name="Abu-Threideh J."/>
            <person name="Stoneking T."/>
            <person name="Kalicki J."/>
            <person name="Graves T."/>
            <person name="Harmon G."/>
            <person name="Edwards J."/>
            <person name="Latreille P."/>
            <person name="Courtney L."/>
            <person name="Cloud J."/>
            <person name="Abbott A."/>
            <person name="Scott K."/>
            <person name="Johnson D."/>
            <person name="Minx P."/>
            <person name="Bentley D."/>
            <person name="Fulton B."/>
            <person name="Miller N."/>
            <person name="Greco T."/>
            <person name="Kemp K."/>
            <person name="Kramer J."/>
            <person name="Fulton L."/>
            <person name="Mardis E."/>
            <person name="Dante M."/>
            <person name="Pepin K."/>
            <person name="Hillier L.W."/>
            <person name="Nelson J."/>
            <person name="Spieth J."/>
            <person name="Ryan E."/>
            <person name="Andrews S."/>
            <person name="Geisel C."/>
            <person name="Layman D."/>
            <person name="Du H."/>
            <person name="Ali J."/>
            <person name="Berghoff A."/>
            <person name="Jones K."/>
            <person name="Drone K."/>
            <person name="Cotton M."/>
            <person name="Joshu C."/>
            <person name="Antonoiu B."/>
            <person name="Zidanic M."/>
            <person name="Strong C."/>
            <person name="Sun H."/>
            <person name="Lamar B."/>
            <person name="Yordan C."/>
            <person name="Ma P."/>
            <person name="Zhong J."/>
            <person name="Preston R."/>
            <person name="Vil D."/>
            <person name="Shekher M."/>
            <person name="Matero A."/>
            <person name="Shah R."/>
            <person name="Swaby I.K."/>
            <person name="O'Shaughnessy A."/>
            <person name="Rodriguez M."/>
            <person name="Hoffman J."/>
            <person name="Till S."/>
            <person name="Granat S."/>
            <person name="Shohdy N."/>
            <person name="Hasegawa A."/>
            <person name="Hameed A."/>
            <person name="Lodhi M."/>
            <person name="Johnson A."/>
            <person name="Chen E."/>
            <person name="Marra M.A."/>
            <person name="Martienssen R."/>
            <person name="McCombie W.R."/>
        </authorList>
    </citation>
    <scope>NUCLEOTIDE SEQUENCE [LARGE SCALE GENOMIC DNA]</scope>
    <source>
        <strain>cv. Columbia</strain>
    </source>
</reference>
<reference key="2">
    <citation type="journal article" date="2017" name="Plant J.">
        <title>Araport11: a complete reannotation of the Arabidopsis thaliana reference genome.</title>
        <authorList>
            <person name="Cheng C.Y."/>
            <person name="Krishnakumar V."/>
            <person name="Chan A.P."/>
            <person name="Thibaud-Nissen F."/>
            <person name="Schobel S."/>
            <person name="Town C.D."/>
        </authorList>
    </citation>
    <scope>GENOME REANNOTATION</scope>
    <source>
        <strain>cv. Columbia</strain>
    </source>
</reference>
<reference key="3">
    <citation type="journal article" date="2003" name="Science">
        <title>Empirical analysis of transcriptional activity in the Arabidopsis genome.</title>
        <authorList>
            <person name="Yamada K."/>
            <person name="Lim J."/>
            <person name="Dale J.M."/>
            <person name="Chen H."/>
            <person name="Shinn P."/>
            <person name="Palm C.J."/>
            <person name="Southwick A.M."/>
            <person name="Wu H.C."/>
            <person name="Kim C.J."/>
            <person name="Nguyen M."/>
            <person name="Pham P.K."/>
            <person name="Cheuk R.F."/>
            <person name="Karlin-Newmann G."/>
            <person name="Liu S.X."/>
            <person name="Lam B."/>
            <person name="Sakano H."/>
            <person name="Wu T."/>
            <person name="Yu G."/>
            <person name="Miranda M."/>
            <person name="Quach H.L."/>
            <person name="Tripp M."/>
            <person name="Chang C.H."/>
            <person name="Lee J.M."/>
            <person name="Toriumi M.J."/>
            <person name="Chan M.M."/>
            <person name="Tang C.C."/>
            <person name="Onodera C.S."/>
            <person name="Deng J.M."/>
            <person name="Akiyama K."/>
            <person name="Ansari Y."/>
            <person name="Arakawa T."/>
            <person name="Banh J."/>
            <person name="Banno F."/>
            <person name="Bowser L."/>
            <person name="Brooks S.Y."/>
            <person name="Carninci P."/>
            <person name="Chao Q."/>
            <person name="Choy N."/>
            <person name="Enju A."/>
            <person name="Goldsmith A.D."/>
            <person name="Gurjal M."/>
            <person name="Hansen N.F."/>
            <person name="Hayashizaki Y."/>
            <person name="Johnson-Hopson C."/>
            <person name="Hsuan V.W."/>
            <person name="Iida K."/>
            <person name="Karnes M."/>
            <person name="Khan S."/>
            <person name="Koesema E."/>
            <person name="Ishida J."/>
            <person name="Jiang P.X."/>
            <person name="Jones T."/>
            <person name="Kawai J."/>
            <person name="Kamiya A."/>
            <person name="Meyers C."/>
            <person name="Nakajima M."/>
            <person name="Narusaka M."/>
            <person name="Seki M."/>
            <person name="Sakurai T."/>
            <person name="Satou M."/>
            <person name="Tamse R."/>
            <person name="Vaysberg M."/>
            <person name="Wallender E.K."/>
            <person name="Wong C."/>
            <person name="Yamamura Y."/>
            <person name="Yuan S."/>
            <person name="Shinozaki K."/>
            <person name="Davis R.W."/>
            <person name="Theologis A."/>
            <person name="Ecker J.R."/>
        </authorList>
    </citation>
    <scope>NUCLEOTIDE SEQUENCE [LARGE SCALE MRNA] OF 365-661</scope>
    <source>
        <strain>cv. Columbia</strain>
    </source>
</reference>
<reference key="4">
    <citation type="journal article" date="2001" name="Cell Stress Chaperones">
        <title>The J-domain proteins of Arabidopsis thaliana: an unexpectedly large and diverse family of chaperones.</title>
        <authorList>
            <person name="Miernyk J.A."/>
        </authorList>
    </citation>
    <scope>GENE FAMILY</scope>
    <scope>NOMENCLATURE</scope>
</reference>
<reference key="5">
    <citation type="journal article" date="2008" name="Plant Cell Physiol.">
        <title>Arabidopsis thaliana has a set of J proteins in the endoplasmic reticulum that are conserved from yeast to animals and plants.</title>
        <authorList>
            <person name="Yamamoto M."/>
            <person name="Maruyama D."/>
            <person name="Endo T."/>
            <person name="Nishikawa S."/>
        </authorList>
    </citation>
    <scope>SUBCELLULAR LOCATION</scope>
    <scope>TISSUE SPECIFICITY</scope>
    <scope>INDUCTION BY TUNICAMYCIN</scope>
    <scope>DISRUPTION PHENOTYPE</scope>
</reference>
<reference key="6">
    <citation type="journal article" date="2012" name="J. Cell Sci.">
        <title>AtTPR7 is a chaperone-docking protein of the Sec translocon in Arabidopsis.</title>
        <authorList>
            <person name="Schweiger R."/>
            <person name="Muller N.C."/>
            <person name="Schmitt M.J."/>
            <person name="Soll J."/>
            <person name="Schwenkert S."/>
        </authorList>
    </citation>
    <scope>INTERACTION WITH OEP61/TPR7</scope>
</reference>
<organism>
    <name type="scientific">Arabidopsis thaliana</name>
    <name type="common">Mouse-ear cress</name>
    <dbReference type="NCBI Taxonomy" id="3702"/>
    <lineage>
        <taxon>Eukaryota</taxon>
        <taxon>Viridiplantae</taxon>
        <taxon>Streptophyta</taxon>
        <taxon>Embryophyta</taxon>
        <taxon>Tracheophyta</taxon>
        <taxon>Spermatophyta</taxon>
        <taxon>Magnoliopsida</taxon>
        <taxon>eudicotyledons</taxon>
        <taxon>Gunneridae</taxon>
        <taxon>Pentapetalae</taxon>
        <taxon>rosids</taxon>
        <taxon>malvids</taxon>
        <taxon>Brassicales</taxon>
        <taxon>Brassicaceae</taxon>
        <taxon>Camelineae</taxon>
        <taxon>Arabidopsis</taxon>
    </lineage>
</organism>
<comment type="function">
    <text evidence="1">Required for integral membrane and secreted preprotein translocation across the endoplasmic reticulum membrane.</text>
</comment>
<comment type="subunit">
    <text evidence="6">Interacts with OEP61/TPR7.</text>
</comment>
<comment type="subcellular location">
    <subcellularLocation>
        <location evidence="8">Endoplasmic reticulum membrane</location>
        <topology evidence="8">Multi-pass membrane protein</topology>
    </subcellularLocation>
</comment>
<comment type="tissue specificity">
    <text evidence="5">Expressed in leaves, flower buds and flowers.</text>
</comment>
<comment type="induction">
    <text evidence="5">By tunicamycin.</text>
</comment>
<comment type="disruption phenotype">
    <text evidence="5">No visible phenotype under normal growth conditions.</text>
</comment>
<comment type="sequence caution" evidence="7">
    <conflict type="erroneous gene model prediction">
        <sequence resource="EMBL-CDS" id="CAA17537"/>
    </conflict>
</comment>
<comment type="sequence caution" evidence="7">
    <conflict type="erroneous gene model prediction">
        <sequence resource="EMBL-CDS" id="CAB79118"/>
    </conflict>
</comment>
<dbReference type="EMBL" id="AL021960">
    <property type="protein sequence ID" value="CAA17537.1"/>
    <property type="status" value="ALT_SEQ"/>
    <property type="molecule type" value="Genomic_DNA"/>
</dbReference>
<dbReference type="EMBL" id="AL161554">
    <property type="protein sequence ID" value="CAB79118.1"/>
    <property type="status" value="ALT_SEQ"/>
    <property type="molecule type" value="Genomic_DNA"/>
</dbReference>
<dbReference type="EMBL" id="CP002687">
    <property type="protein sequence ID" value="AEE84416.1"/>
    <property type="molecule type" value="Genomic_DNA"/>
</dbReference>
<dbReference type="EMBL" id="AY050792">
    <property type="protein sequence ID" value="AAK92727.2"/>
    <property type="molecule type" value="mRNA"/>
</dbReference>
<dbReference type="PIR" id="T04949">
    <property type="entry name" value="T04949"/>
</dbReference>
<dbReference type="RefSeq" id="NP_567621.1">
    <property type="nucleotide sequence ID" value="NM_118237.4"/>
</dbReference>
<dbReference type="FunCoup" id="F4JIN3">
    <property type="interactions" value="3847"/>
</dbReference>
<dbReference type="STRING" id="3702.F4JIN3"/>
<dbReference type="GlyCosmos" id="F4JIN3">
    <property type="glycosylation" value="1 site, No reported glycans"/>
</dbReference>
<dbReference type="GlyGen" id="F4JIN3">
    <property type="glycosylation" value="1 site"/>
</dbReference>
<dbReference type="iPTMnet" id="F4JIN3"/>
<dbReference type="PaxDb" id="3702-AT4G21180.1"/>
<dbReference type="ProteomicsDB" id="222085"/>
<dbReference type="EnsemblPlants" id="AT4G21180.1">
    <property type="protein sequence ID" value="AT4G21180.1"/>
    <property type="gene ID" value="AT4G21180"/>
</dbReference>
<dbReference type="GeneID" id="827866"/>
<dbReference type="Gramene" id="AT4G21180.1">
    <property type="protein sequence ID" value="AT4G21180.1"/>
    <property type="gene ID" value="AT4G21180"/>
</dbReference>
<dbReference type="KEGG" id="ath:AT4G21180"/>
<dbReference type="Araport" id="AT4G21180"/>
<dbReference type="TAIR" id="AT4G21180">
    <property type="gene designation" value="ATERDJ2B"/>
</dbReference>
<dbReference type="eggNOG" id="KOG0721">
    <property type="taxonomic scope" value="Eukaryota"/>
</dbReference>
<dbReference type="eggNOG" id="KOG0951">
    <property type="taxonomic scope" value="Eukaryota"/>
</dbReference>
<dbReference type="HOGENOM" id="CLU_014210_2_0_1"/>
<dbReference type="InParanoid" id="F4JIN3"/>
<dbReference type="OMA" id="IAISETM"/>
<dbReference type="PRO" id="PR:F4JIN3"/>
<dbReference type="Proteomes" id="UP000006548">
    <property type="component" value="Chromosome 4"/>
</dbReference>
<dbReference type="ExpressionAtlas" id="F4JIN3">
    <property type="expression patterns" value="baseline and differential"/>
</dbReference>
<dbReference type="GO" id="GO:0005829">
    <property type="term" value="C:cytosol"/>
    <property type="evidence" value="ECO:0007005"/>
    <property type="project" value="TAIR"/>
</dbReference>
<dbReference type="GO" id="GO:0005783">
    <property type="term" value="C:endoplasmic reticulum"/>
    <property type="evidence" value="ECO:0007005"/>
    <property type="project" value="TAIR"/>
</dbReference>
<dbReference type="GO" id="GO:0005789">
    <property type="term" value="C:endoplasmic reticulum membrane"/>
    <property type="evidence" value="ECO:0007669"/>
    <property type="project" value="UniProtKB-SubCell"/>
</dbReference>
<dbReference type="GO" id="GO:0015031">
    <property type="term" value="P:protein transport"/>
    <property type="evidence" value="ECO:0007669"/>
    <property type="project" value="UniProtKB-KW"/>
</dbReference>
<dbReference type="CDD" id="cd06257">
    <property type="entry name" value="DnaJ"/>
    <property type="match status" value="1"/>
</dbReference>
<dbReference type="FunFam" id="1.10.287.110:FF:000038">
    <property type="entry name" value="DnaJ protein ERDJ2A"/>
    <property type="match status" value="1"/>
</dbReference>
<dbReference type="FunFam" id="1.10.3380.10:FF:000007">
    <property type="entry name" value="DnaJ protein ERDJ2A"/>
    <property type="match status" value="1"/>
</dbReference>
<dbReference type="Gene3D" id="1.10.150.20">
    <property type="entry name" value="5' to 3' exonuclease, C-terminal subdomain"/>
    <property type="match status" value="1"/>
</dbReference>
<dbReference type="Gene3D" id="2.60.40.150">
    <property type="entry name" value="C2 domain"/>
    <property type="match status" value="1"/>
</dbReference>
<dbReference type="Gene3D" id="1.10.287.110">
    <property type="entry name" value="DnaJ domain"/>
    <property type="match status" value="1"/>
</dbReference>
<dbReference type="Gene3D" id="1.10.3380.10">
    <property type="entry name" value="Sec63 N-terminal domain-like domain"/>
    <property type="match status" value="1"/>
</dbReference>
<dbReference type="InterPro" id="IPR035892">
    <property type="entry name" value="C2_domain_sf"/>
</dbReference>
<dbReference type="InterPro" id="IPR001623">
    <property type="entry name" value="DnaJ_domain"/>
</dbReference>
<dbReference type="InterPro" id="IPR014756">
    <property type="entry name" value="Ig_E-set"/>
</dbReference>
<dbReference type="InterPro" id="IPR036869">
    <property type="entry name" value="J_dom_sf"/>
</dbReference>
<dbReference type="InterPro" id="IPR004179">
    <property type="entry name" value="Sec63-dom"/>
</dbReference>
<dbReference type="PANTHER" id="PTHR24075:SF10">
    <property type="entry name" value="DNAJ PROTEIN ERDJ2B"/>
    <property type="match status" value="1"/>
</dbReference>
<dbReference type="PANTHER" id="PTHR24075">
    <property type="entry name" value="SEC63 DOMAIN-CONTAINING"/>
    <property type="match status" value="1"/>
</dbReference>
<dbReference type="Pfam" id="PF00226">
    <property type="entry name" value="DnaJ"/>
    <property type="match status" value="1"/>
</dbReference>
<dbReference type="Pfam" id="PF02889">
    <property type="entry name" value="Sec63"/>
    <property type="match status" value="1"/>
</dbReference>
<dbReference type="PRINTS" id="PR00625">
    <property type="entry name" value="JDOMAIN"/>
</dbReference>
<dbReference type="SMART" id="SM00271">
    <property type="entry name" value="DnaJ"/>
    <property type="match status" value="1"/>
</dbReference>
<dbReference type="SMART" id="SM00973">
    <property type="entry name" value="Sec63"/>
    <property type="match status" value="1"/>
</dbReference>
<dbReference type="SUPFAM" id="SSF46565">
    <property type="entry name" value="Chaperone J-domain"/>
    <property type="match status" value="1"/>
</dbReference>
<dbReference type="SUPFAM" id="SSF81296">
    <property type="entry name" value="E set domains"/>
    <property type="match status" value="1"/>
</dbReference>
<dbReference type="SUPFAM" id="SSF158702">
    <property type="entry name" value="Sec63 N-terminal domain-like"/>
    <property type="match status" value="1"/>
</dbReference>
<dbReference type="PROSITE" id="PS50076">
    <property type="entry name" value="DNAJ_2"/>
    <property type="match status" value="1"/>
</dbReference>
<evidence type="ECO:0000250" key="1"/>
<evidence type="ECO:0000255" key="2"/>
<evidence type="ECO:0000255" key="3">
    <source>
        <dbReference type="PROSITE-ProRule" id="PRU00286"/>
    </source>
</evidence>
<evidence type="ECO:0000256" key="4">
    <source>
        <dbReference type="SAM" id="MobiDB-lite"/>
    </source>
</evidence>
<evidence type="ECO:0000269" key="5">
    <source>
    </source>
</evidence>
<evidence type="ECO:0000269" key="6">
    <source>
    </source>
</evidence>
<evidence type="ECO:0000305" key="7"/>
<evidence type="ECO:0000305" key="8">
    <source>
    </source>
</evidence>
<accession>F4JIN3</accession>
<accession>O49559</accession>
<accession>Q949Z5</accession>
<proteinExistence type="evidence at protein level"/>
<name>DNJ29_ARATH</name>
<keyword id="KW-0143">Chaperone</keyword>
<keyword id="KW-0256">Endoplasmic reticulum</keyword>
<keyword id="KW-0325">Glycoprotein</keyword>
<keyword id="KW-0472">Membrane</keyword>
<keyword id="KW-0653">Protein transport</keyword>
<keyword id="KW-1185">Reference proteome</keyword>
<keyword id="KW-0812">Transmembrane</keyword>
<keyword id="KW-1133">Transmembrane helix</keyword>
<keyword id="KW-0813">Transport</keyword>
<sequence length="661" mass="74825">MAESEENSVLFPIFILTMMAIPLVPYTFVKLSRAFSKKQRSIHCQCLECDRSGKYKRSISQSISSFTSCSNLTVVLLWIVMIFLIYHTKNMSRESQLFEPFGILGLEPGASDSEIKKAYRRLSIQYHPDKNPDPEANKYFVESIAKAYQALTDPLSRENFEKYGHPDGRQGYTMGIALPQFILNMNGESGGILLLCTVGLCILLPLVIASIYLWRSSKYTGNHVKLQTRQAYFELLQPSLTPSKVMDIFIRAAEYAEISVRKSDDESLQKLFMSVKSELNLDPKKLKQEEAKFWKKHPATIKTELLIQKQLTRESSVLSPTLQRDFRHVLEFAPRLLEDLIKMAVIPRNEQGRGWLRPALGVMELSQCIVQAVPLSARKSSSEDIAPFLQLPHFNESIAKSIALQVKSFQKFQELSLAERSKLLREVVSLSETDVQDIEKVLEMIPSLKINVTCKTEGEEGIQEGDIMTVQAWITLKRPNGLIGAIPHSPYFPFHKEENFWVLLADSNHVWFFQKVKFMDEAGAIAAASNTITETMEPLGASVKETNDAVKEAVEKVKSGSRLVMGRLLAPGEGTYNLTCFCLSDTWIGCDQKTSLKVEVLKRTRDVEGENAEEGLEEEDDEIEEEDYESEYSEDEEDKKRGSKKKVNKESSSEESGSDEE</sequence>
<gene>
    <name type="primary">ERDJ2B</name>
    <name type="synonym">C29</name>
    <name type="ordered locus">At4g21180</name>
    <name type="ORF">F7J7.120</name>
</gene>
<feature type="chain" id="PRO_0000430365" description="DnaJ protein ERDJ2B">
    <location>
        <begin position="1"/>
        <end position="661"/>
    </location>
</feature>
<feature type="topological domain" description="Lumenal" evidence="2">
    <location>
        <begin position="1"/>
        <end position="8"/>
    </location>
</feature>
<feature type="transmembrane region" description="Helical; Name=1" evidence="2">
    <location>
        <begin position="9"/>
        <end position="29"/>
    </location>
</feature>
<feature type="topological domain" description="Cytoplasmic" evidence="2">
    <location>
        <begin position="30"/>
        <end position="65"/>
    </location>
</feature>
<feature type="transmembrane region" description="Helical; Name=2" evidence="2">
    <location>
        <begin position="66"/>
        <end position="86"/>
    </location>
</feature>
<feature type="topological domain" description="Lumenal" evidence="2">
    <location>
        <begin position="87"/>
        <end position="190"/>
    </location>
</feature>
<feature type="transmembrane region" description="Helical; Name=3" evidence="2">
    <location>
        <begin position="191"/>
        <end position="211"/>
    </location>
</feature>
<feature type="topological domain" description="Cytoplasmic" evidence="2">
    <location>
        <begin position="212"/>
        <end position="661"/>
    </location>
</feature>
<feature type="domain" description="J" evidence="3">
    <location>
        <begin position="99"/>
        <end position="164"/>
    </location>
</feature>
<feature type="domain" description="SEC63">
    <location>
        <begin position="206"/>
        <end position="597"/>
    </location>
</feature>
<feature type="region of interest" description="Disordered" evidence="4">
    <location>
        <begin position="608"/>
        <end position="661"/>
    </location>
</feature>
<feature type="compositionally biased region" description="Acidic residues" evidence="4">
    <location>
        <begin position="609"/>
        <end position="637"/>
    </location>
</feature>
<feature type="glycosylation site" description="N-linked (GlcNAc...) asparagine" evidence="2">
    <location>
        <position position="90"/>
    </location>
</feature>
<protein>
    <recommendedName>
        <fullName>DnaJ protein ERDJ2B</fullName>
    </recommendedName>
    <alternativeName>
        <fullName>Chaperone protein dnaJ 29</fullName>
        <shortName>AtDjC29</shortName>
        <shortName>AtJ29</shortName>
    </alternativeName>
    <alternativeName>
        <fullName>Endoplasmic reticulum dnaJ domain-containing protein 2B</fullName>
        <shortName>AtERdj2B</shortName>
    </alternativeName>
    <alternativeName>
        <fullName>Translocation protein SEC63 homolog ERDJ2B</fullName>
    </alternativeName>
</protein>